<gene>
    <name type="primary">SCLT1</name>
    <name type="synonym">SAP1</name>
</gene>
<evidence type="ECO:0000250" key="1"/>
<evidence type="ECO:0000250" key="2">
    <source>
        <dbReference type="UniProtKB" id="G5E861"/>
    </source>
</evidence>
<evidence type="ECO:0000255" key="3"/>
<evidence type="ECO:0000269" key="4">
    <source>
    </source>
</evidence>
<evidence type="ECO:0000269" key="5">
    <source>
    </source>
</evidence>
<evidence type="ECO:0000269" key="6">
    <source ref="3"/>
</evidence>
<evidence type="ECO:0000303" key="7">
    <source>
    </source>
</evidence>
<evidence type="ECO:0007744" key="8">
    <source>
    </source>
</evidence>
<comment type="function">
    <text evidence="1">Adapter protein that links SCN10A to clathrin. Regulates SCN10A channel activity, possibly by promoting channel internalization (By similarity).</text>
</comment>
<comment type="subunit">
    <text evidence="1">Interacts with SCN10A and clathrin. Identified in a complex containing SCN10A, clathrin and SCLT1 (By similarity).</text>
</comment>
<comment type="interaction">
    <interactant intactId="EBI-25961722">
        <id>Q96NL6-3</id>
    </interactant>
    <interactant intactId="EBI-466029">
        <id>P42858</id>
        <label>HTT</label>
    </interactant>
    <organismsDiffer>false</organismsDiffer>
    <experiments>3</experiments>
</comment>
<comment type="subcellular location">
    <subcellularLocation>
        <location evidence="5">Cytoplasm</location>
        <location evidence="5">Cytoskeleton</location>
        <location evidence="5">Microtubule organizing center</location>
        <location evidence="5">Centrosome</location>
        <location evidence="5">Centriole</location>
    </subcellularLocation>
    <text>Localizes to the distal appendage region of the centriole, which anchors the mother centriole to the plasma membrane.</text>
</comment>
<comment type="alternative products">
    <event type="alternative splicing"/>
    <isoform>
        <id>Q96NL6-1</id>
        <name>1</name>
        <sequence type="displayed"/>
    </isoform>
    <isoform>
        <id>Q96NL6-2</id>
        <name>2</name>
        <sequence type="described" ref="VSP_030907"/>
    </isoform>
    <isoform>
        <id>Q96NL6-3</id>
        <name>3</name>
        <sequence type="described" ref="VSP_030906"/>
    </isoform>
    <isoform>
        <id>Q96NL6-4</id>
        <name>4</name>
        <sequence type="described" ref="VSP_030904 VSP_030905"/>
    </isoform>
</comment>
<name>SCLT1_HUMAN</name>
<protein>
    <recommendedName>
        <fullName>Sodium channel and clathrin linker 1</fullName>
    </recommendedName>
    <alternativeName>
        <fullName>Sodium channel-associated protein 1</fullName>
    </alternativeName>
</protein>
<organism>
    <name type="scientific">Homo sapiens</name>
    <name type="common">Human</name>
    <dbReference type="NCBI Taxonomy" id="9606"/>
    <lineage>
        <taxon>Eukaryota</taxon>
        <taxon>Metazoa</taxon>
        <taxon>Chordata</taxon>
        <taxon>Craniata</taxon>
        <taxon>Vertebrata</taxon>
        <taxon>Euteleostomi</taxon>
        <taxon>Mammalia</taxon>
        <taxon>Eutheria</taxon>
        <taxon>Euarchontoglires</taxon>
        <taxon>Primates</taxon>
        <taxon>Haplorrhini</taxon>
        <taxon>Catarrhini</taxon>
        <taxon>Hominidae</taxon>
        <taxon>Homo</taxon>
    </lineage>
</organism>
<accession>Q96NL6</accession>
<accession>A4QN04</accession>
<accession>Q0VAH2</accession>
<accession>Q6P2M4</accession>
<reference key="1">
    <citation type="journal article" date="2004" name="Nat. Genet.">
        <title>Complete sequencing and characterization of 21,243 full-length human cDNAs.</title>
        <authorList>
            <person name="Ota T."/>
            <person name="Suzuki Y."/>
            <person name="Nishikawa T."/>
            <person name="Otsuki T."/>
            <person name="Sugiyama T."/>
            <person name="Irie R."/>
            <person name="Wakamatsu A."/>
            <person name="Hayashi K."/>
            <person name="Sato H."/>
            <person name="Nagai K."/>
            <person name="Kimura K."/>
            <person name="Makita H."/>
            <person name="Sekine M."/>
            <person name="Obayashi M."/>
            <person name="Nishi T."/>
            <person name="Shibahara T."/>
            <person name="Tanaka T."/>
            <person name="Ishii S."/>
            <person name="Yamamoto J."/>
            <person name="Saito K."/>
            <person name="Kawai Y."/>
            <person name="Isono Y."/>
            <person name="Nakamura Y."/>
            <person name="Nagahari K."/>
            <person name="Murakami K."/>
            <person name="Yasuda T."/>
            <person name="Iwayanagi T."/>
            <person name="Wagatsuma M."/>
            <person name="Shiratori A."/>
            <person name="Sudo H."/>
            <person name="Hosoiri T."/>
            <person name="Kaku Y."/>
            <person name="Kodaira H."/>
            <person name="Kondo H."/>
            <person name="Sugawara M."/>
            <person name="Takahashi M."/>
            <person name="Kanda K."/>
            <person name="Yokoi T."/>
            <person name="Furuya T."/>
            <person name="Kikkawa E."/>
            <person name="Omura Y."/>
            <person name="Abe K."/>
            <person name="Kamihara K."/>
            <person name="Katsuta N."/>
            <person name="Sato K."/>
            <person name="Tanikawa M."/>
            <person name="Yamazaki M."/>
            <person name="Ninomiya K."/>
            <person name="Ishibashi T."/>
            <person name="Yamashita H."/>
            <person name="Murakawa K."/>
            <person name="Fujimori K."/>
            <person name="Tanai H."/>
            <person name="Kimata M."/>
            <person name="Watanabe M."/>
            <person name="Hiraoka S."/>
            <person name="Chiba Y."/>
            <person name="Ishida S."/>
            <person name="Ono Y."/>
            <person name="Takiguchi S."/>
            <person name="Watanabe S."/>
            <person name="Yosida M."/>
            <person name="Hotuta T."/>
            <person name="Kusano J."/>
            <person name="Kanehori K."/>
            <person name="Takahashi-Fujii A."/>
            <person name="Hara H."/>
            <person name="Tanase T.-O."/>
            <person name="Nomura Y."/>
            <person name="Togiya S."/>
            <person name="Komai F."/>
            <person name="Hara R."/>
            <person name="Takeuchi K."/>
            <person name="Arita M."/>
            <person name="Imose N."/>
            <person name="Musashino K."/>
            <person name="Yuuki H."/>
            <person name="Oshima A."/>
            <person name="Sasaki N."/>
            <person name="Aotsuka S."/>
            <person name="Yoshikawa Y."/>
            <person name="Matsunawa H."/>
            <person name="Ichihara T."/>
            <person name="Shiohata N."/>
            <person name="Sano S."/>
            <person name="Moriya S."/>
            <person name="Momiyama H."/>
            <person name="Satoh N."/>
            <person name="Takami S."/>
            <person name="Terashima Y."/>
            <person name="Suzuki O."/>
            <person name="Nakagawa S."/>
            <person name="Senoh A."/>
            <person name="Mizoguchi H."/>
            <person name="Goto Y."/>
            <person name="Shimizu F."/>
            <person name="Wakebe H."/>
            <person name="Hishigaki H."/>
            <person name="Watanabe T."/>
            <person name="Sugiyama A."/>
            <person name="Takemoto M."/>
            <person name="Kawakami B."/>
            <person name="Yamazaki M."/>
            <person name="Watanabe K."/>
            <person name="Kumagai A."/>
            <person name="Itakura S."/>
            <person name="Fukuzumi Y."/>
            <person name="Fujimori Y."/>
            <person name="Komiyama M."/>
            <person name="Tashiro H."/>
            <person name="Tanigami A."/>
            <person name="Fujiwara T."/>
            <person name="Ono T."/>
            <person name="Yamada K."/>
            <person name="Fujii Y."/>
            <person name="Ozaki K."/>
            <person name="Hirao M."/>
            <person name="Ohmori Y."/>
            <person name="Kawabata A."/>
            <person name="Hikiji T."/>
            <person name="Kobatake N."/>
            <person name="Inagaki H."/>
            <person name="Ikema Y."/>
            <person name="Okamoto S."/>
            <person name="Okitani R."/>
            <person name="Kawakami T."/>
            <person name="Noguchi S."/>
            <person name="Itoh T."/>
            <person name="Shigeta K."/>
            <person name="Senba T."/>
            <person name="Matsumura K."/>
            <person name="Nakajima Y."/>
            <person name="Mizuno T."/>
            <person name="Morinaga M."/>
            <person name="Sasaki M."/>
            <person name="Togashi T."/>
            <person name="Oyama M."/>
            <person name="Hata H."/>
            <person name="Watanabe M."/>
            <person name="Komatsu T."/>
            <person name="Mizushima-Sugano J."/>
            <person name="Satoh T."/>
            <person name="Shirai Y."/>
            <person name="Takahashi Y."/>
            <person name="Nakagawa K."/>
            <person name="Okumura K."/>
            <person name="Nagase T."/>
            <person name="Nomura N."/>
            <person name="Kikuchi H."/>
            <person name="Masuho Y."/>
            <person name="Yamashita R."/>
            <person name="Nakai K."/>
            <person name="Yada T."/>
            <person name="Nakamura Y."/>
            <person name="Ohara O."/>
            <person name="Isogai T."/>
            <person name="Sugano S."/>
        </authorList>
    </citation>
    <scope>NUCLEOTIDE SEQUENCE [LARGE SCALE MRNA] (ISOFORM 1)</scope>
    <scope>VARIANT CYS-441</scope>
</reference>
<reference key="2">
    <citation type="journal article" date="2005" name="Nature">
        <title>Generation and annotation of the DNA sequences of human chromosomes 2 and 4.</title>
        <authorList>
            <person name="Hillier L.W."/>
            <person name="Graves T.A."/>
            <person name="Fulton R.S."/>
            <person name="Fulton L.A."/>
            <person name="Pepin K.H."/>
            <person name="Minx P."/>
            <person name="Wagner-McPherson C."/>
            <person name="Layman D."/>
            <person name="Wylie K."/>
            <person name="Sekhon M."/>
            <person name="Becker M.C."/>
            <person name="Fewell G.A."/>
            <person name="Delehaunty K.D."/>
            <person name="Miner T.L."/>
            <person name="Nash W.E."/>
            <person name="Kremitzki C."/>
            <person name="Oddy L."/>
            <person name="Du H."/>
            <person name="Sun H."/>
            <person name="Bradshaw-Cordum H."/>
            <person name="Ali J."/>
            <person name="Carter J."/>
            <person name="Cordes M."/>
            <person name="Harris A."/>
            <person name="Isak A."/>
            <person name="van Brunt A."/>
            <person name="Nguyen C."/>
            <person name="Du F."/>
            <person name="Courtney L."/>
            <person name="Kalicki J."/>
            <person name="Ozersky P."/>
            <person name="Abbott S."/>
            <person name="Armstrong J."/>
            <person name="Belter E.A."/>
            <person name="Caruso L."/>
            <person name="Cedroni M."/>
            <person name="Cotton M."/>
            <person name="Davidson T."/>
            <person name="Desai A."/>
            <person name="Elliott G."/>
            <person name="Erb T."/>
            <person name="Fronick C."/>
            <person name="Gaige T."/>
            <person name="Haakenson W."/>
            <person name="Haglund K."/>
            <person name="Holmes A."/>
            <person name="Harkins R."/>
            <person name="Kim K."/>
            <person name="Kruchowski S.S."/>
            <person name="Strong C.M."/>
            <person name="Grewal N."/>
            <person name="Goyea E."/>
            <person name="Hou S."/>
            <person name="Levy A."/>
            <person name="Martinka S."/>
            <person name="Mead K."/>
            <person name="McLellan M.D."/>
            <person name="Meyer R."/>
            <person name="Randall-Maher J."/>
            <person name="Tomlinson C."/>
            <person name="Dauphin-Kohlberg S."/>
            <person name="Kozlowicz-Reilly A."/>
            <person name="Shah N."/>
            <person name="Swearengen-Shahid S."/>
            <person name="Snider J."/>
            <person name="Strong J.T."/>
            <person name="Thompson J."/>
            <person name="Yoakum M."/>
            <person name="Leonard S."/>
            <person name="Pearman C."/>
            <person name="Trani L."/>
            <person name="Radionenko M."/>
            <person name="Waligorski J.E."/>
            <person name="Wang C."/>
            <person name="Rock S.M."/>
            <person name="Tin-Wollam A.-M."/>
            <person name="Maupin R."/>
            <person name="Latreille P."/>
            <person name="Wendl M.C."/>
            <person name="Yang S.-P."/>
            <person name="Pohl C."/>
            <person name="Wallis J.W."/>
            <person name="Spieth J."/>
            <person name="Bieri T.A."/>
            <person name="Berkowicz N."/>
            <person name="Nelson J.O."/>
            <person name="Osborne J."/>
            <person name="Ding L."/>
            <person name="Meyer R."/>
            <person name="Sabo A."/>
            <person name="Shotland Y."/>
            <person name="Sinha P."/>
            <person name="Wohldmann P.E."/>
            <person name="Cook L.L."/>
            <person name="Hickenbotham M.T."/>
            <person name="Eldred J."/>
            <person name="Williams D."/>
            <person name="Jones T.A."/>
            <person name="She X."/>
            <person name="Ciccarelli F.D."/>
            <person name="Izaurralde E."/>
            <person name="Taylor J."/>
            <person name="Schmutz J."/>
            <person name="Myers R.M."/>
            <person name="Cox D.R."/>
            <person name="Huang X."/>
            <person name="McPherson J.D."/>
            <person name="Mardis E.R."/>
            <person name="Clifton S.W."/>
            <person name="Warren W.C."/>
            <person name="Chinwalla A.T."/>
            <person name="Eddy S.R."/>
            <person name="Marra M.A."/>
            <person name="Ovcharenko I."/>
            <person name="Furey T.S."/>
            <person name="Miller W."/>
            <person name="Eichler E.E."/>
            <person name="Bork P."/>
            <person name="Suyama M."/>
            <person name="Torrents D."/>
            <person name="Waterston R.H."/>
            <person name="Wilson R.K."/>
        </authorList>
    </citation>
    <scope>NUCLEOTIDE SEQUENCE [LARGE SCALE GENOMIC DNA]</scope>
</reference>
<reference key="3">
    <citation type="submission" date="2005-09" db="EMBL/GenBank/DDBJ databases">
        <authorList>
            <person name="Mural R.J."/>
            <person name="Istrail S."/>
            <person name="Sutton G.G."/>
            <person name="Florea L."/>
            <person name="Halpern A.L."/>
            <person name="Mobarry C.M."/>
            <person name="Lippert R."/>
            <person name="Walenz B."/>
            <person name="Shatkay H."/>
            <person name="Dew I."/>
            <person name="Miller J.R."/>
            <person name="Flanigan M.J."/>
            <person name="Edwards N.J."/>
            <person name="Bolanos R."/>
            <person name="Fasulo D."/>
            <person name="Halldorsson B.V."/>
            <person name="Hannenhalli S."/>
            <person name="Turner R."/>
            <person name="Yooseph S."/>
            <person name="Lu F."/>
            <person name="Nusskern D.R."/>
            <person name="Shue B.C."/>
            <person name="Zheng X.H."/>
            <person name="Zhong F."/>
            <person name="Delcher A.L."/>
            <person name="Huson D.H."/>
            <person name="Kravitz S.A."/>
            <person name="Mouchard L."/>
            <person name="Reinert K."/>
            <person name="Remington K.A."/>
            <person name="Clark A.G."/>
            <person name="Waterman M.S."/>
            <person name="Eichler E.E."/>
            <person name="Adams M.D."/>
            <person name="Hunkapiller M.W."/>
            <person name="Myers E.W."/>
            <person name="Venter J.C."/>
        </authorList>
    </citation>
    <scope>NUCLEOTIDE SEQUENCE [LARGE SCALE GENOMIC DNA]</scope>
    <scope>VARIANT CYS-441</scope>
</reference>
<reference key="4">
    <citation type="journal article" date="2004" name="Genome Res.">
        <title>The status, quality, and expansion of the NIH full-length cDNA project: the Mammalian Gene Collection (MGC).</title>
        <authorList>
            <consortium name="The MGC Project Team"/>
        </authorList>
    </citation>
    <scope>NUCLEOTIDE SEQUENCE [LARGE SCALE MRNA] (ISOFORMS 2; 3 AND 4)</scope>
    <source>
        <tissue>Lung</tissue>
    </source>
</reference>
<reference key="5">
    <citation type="journal article" date="2012" name="Proc. Natl. Acad. Sci. U.S.A.">
        <title>N-terminal acetylome analyses and functional insights of the N-terminal acetyltransferase NatB.</title>
        <authorList>
            <person name="Van Damme P."/>
            <person name="Lasa M."/>
            <person name="Polevoda B."/>
            <person name="Gazquez C."/>
            <person name="Elosegui-Artola A."/>
            <person name="Kim D.S."/>
            <person name="De Juan-Pardo E."/>
            <person name="Demeyer K."/>
            <person name="Hole K."/>
            <person name="Larrea E."/>
            <person name="Timmerman E."/>
            <person name="Prieto J."/>
            <person name="Arnesen T."/>
            <person name="Sherman F."/>
            <person name="Gevaert K."/>
            <person name="Aldabe R."/>
        </authorList>
    </citation>
    <scope>ACETYLATION [LARGE SCALE ANALYSIS] AT ALA-2</scope>
    <scope>CLEAVAGE OF INITIATOR METHIONINE [LARGE SCALE ANALYSIS]</scope>
    <scope>IDENTIFICATION BY MASS SPECTROMETRY [LARGE SCALE ANALYSIS]</scope>
</reference>
<reference key="6">
    <citation type="journal article" date="2013" name="Genes Dev.">
        <title>Centriole distal appendages promote membrane docking, leading to cilia initiation.</title>
        <authorList>
            <person name="Tanos B.E."/>
            <person name="Yang H.J."/>
            <person name="Soni R."/>
            <person name="Wang W.J."/>
            <person name="Macaluso F.P."/>
            <person name="Asara J.M."/>
            <person name="Tsou M.F."/>
        </authorList>
    </citation>
    <scope>SUBCELLULAR LOCATION</scope>
</reference>
<proteinExistence type="evidence at protein level"/>
<sequence>MAAEIDFLREQNRRLNEDFRRYQMESFSKYSSVQKAVCQGEGDDTFENLVFDQSFLAPLVTEYDKHLGELNGQLKYYQKQVGEMKLQLENVIKENERLHSELKDAVEKKLEAFPLGTEVGTDIYADDETVRNLQEQLQLANQEKTQAVELWQTVSQELDRLHKLYQEHMTEAQIHVFESQKQKDQLFDFQQLTKQLHVTNENMEVTNQQFLKTVTEQSVIIEQLRKKLRQAKLELRVAVAKVEELTNVTEDLQGQMKKKEKDVVSAHGREEASDRRLQQLQSSIKQLEIRLCVTIQEANQLRTENTHLEKQTRELQAKCNELENERYEAIVRARNSMQLLEEANLQKSQALLEEKQKEEDIEKMKETVSRFVQDATIRTKKEVANTKKQCNIQISRLTEELSALQMECAEKQGQIERVIKEKKAVEEELEKIYREGRGNESDYRKLEEMHQRFLVSERSKDDLQLRLTRAENRIKQLETDSSEEISRYQEMIQKLQNVLESERENCGLVSEQRLKLQQENKQLRKETESLRKIALEAQKKAKVKISTMEHEFSIKERGFEVQLREMEDSNRNSIVELRHLLATQQKAANRWKEETKKLTESAEIRINNLKSELSRQKLHTQELLSQLEMANEKVAENEKLILEHQEKANRLQRRLSQAEERAASASQQLSVITVQRRKAASLMNLENI</sequence>
<keyword id="KW-0007">Acetylation</keyword>
<keyword id="KW-0025">Alternative splicing</keyword>
<keyword id="KW-0175">Coiled coil</keyword>
<keyword id="KW-0963">Cytoplasm</keyword>
<keyword id="KW-0206">Cytoskeleton</keyword>
<keyword id="KW-0597">Phosphoprotein</keyword>
<keyword id="KW-1267">Proteomics identification</keyword>
<keyword id="KW-1185">Reference proteome</keyword>
<feature type="initiator methionine" description="Removed" evidence="8">
    <location>
        <position position="1"/>
    </location>
</feature>
<feature type="chain" id="PRO_0000317127" description="Sodium channel and clathrin linker 1">
    <location>
        <begin position="2"/>
        <end position="688"/>
    </location>
</feature>
<feature type="coiled-coil region" evidence="3">
    <location>
        <begin position="69"/>
        <end position="673"/>
    </location>
</feature>
<feature type="modified residue" description="N-acetylalanine" evidence="8">
    <location>
        <position position="2"/>
    </location>
</feature>
<feature type="modified residue" description="Phosphoserine" evidence="2">
    <location>
        <position position="681"/>
    </location>
</feature>
<feature type="splice variant" id="VSP_030904" description="In isoform 4." evidence="7">
    <original>K</original>
    <variation>A</variation>
    <location>
        <position position="79"/>
    </location>
</feature>
<feature type="splice variant" id="VSP_030905" description="In isoform 4." evidence="7">
    <location>
        <begin position="80"/>
        <end position="688"/>
    </location>
</feature>
<feature type="splice variant" id="VSP_030906" description="In isoform 3." evidence="7">
    <location>
        <begin position="98"/>
        <end position="610"/>
    </location>
</feature>
<feature type="splice variant" id="VSP_030907" description="In isoform 2." evidence="7">
    <location>
        <begin position="230"/>
        <end position="610"/>
    </location>
</feature>
<feature type="sequence variant" id="VAR_038481" description="In dbSNP:rs10028124." evidence="4 6">
    <original>S</original>
    <variation>C</variation>
    <location>
        <position position="441"/>
    </location>
</feature>
<dbReference type="EMBL" id="AK055217">
    <property type="protein sequence ID" value="BAB70876.1"/>
    <property type="molecule type" value="mRNA"/>
</dbReference>
<dbReference type="EMBL" id="AC093783">
    <property type="status" value="NOT_ANNOTATED_CDS"/>
    <property type="molecule type" value="Genomic_DNA"/>
</dbReference>
<dbReference type="EMBL" id="AC093826">
    <property type="status" value="NOT_ANNOTATED_CDS"/>
    <property type="molecule type" value="Genomic_DNA"/>
</dbReference>
<dbReference type="EMBL" id="CH471056">
    <property type="protein sequence ID" value="EAX05167.1"/>
    <property type="molecule type" value="Genomic_DNA"/>
</dbReference>
<dbReference type="EMBL" id="BC064428">
    <property type="protein sequence ID" value="AAH64428.1"/>
    <property type="molecule type" value="mRNA"/>
</dbReference>
<dbReference type="EMBL" id="BC121057">
    <property type="protein sequence ID" value="AAI21058.1"/>
    <property type="molecule type" value="mRNA"/>
</dbReference>
<dbReference type="EMBL" id="BC121058">
    <property type="protein sequence ID" value="AAI21059.1"/>
    <property type="molecule type" value="mRNA"/>
</dbReference>
<dbReference type="EMBL" id="BC128051">
    <property type="protein sequence ID" value="AAI28052.1"/>
    <property type="molecule type" value="mRNA"/>
</dbReference>
<dbReference type="CCDS" id="CCDS3740.1">
    <molecule id="Q96NL6-1"/>
</dbReference>
<dbReference type="CCDS" id="CCDS77958.1">
    <molecule id="Q96NL6-4"/>
</dbReference>
<dbReference type="RefSeq" id="NP_001287826.1">
    <molecule id="Q96NL6-4"/>
    <property type="nucleotide sequence ID" value="NM_001300897.2"/>
</dbReference>
<dbReference type="RefSeq" id="NP_001287827.1">
    <property type="nucleotide sequence ID" value="NM_001300898.1"/>
</dbReference>
<dbReference type="RefSeq" id="NP_653244.2">
    <molecule id="Q96NL6-1"/>
    <property type="nucleotide sequence ID" value="NM_144643.4"/>
</dbReference>
<dbReference type="SMR" id="Q96NL6"/>
<dbReference type="BioGRID" id="126318">
    <property type="interactions" value="175"/>
</dbReference>
<dbReference type="CORUM" id="Q96NL6"/>
<dbReference type="FunCoup" id="Q96NL6">
    <property type="interactions" value="1709"/>
</dbReference>
<dbReference type="IntAct" id="Q96NL6">
    <property type="interactions" value="170"/>
</dbReference>
<dbReference type="MINT" id="Q96NL6"/>
<dbReference type="STRING" id="9606.ENSP00000281142"/>
<dbReference type="GlyGen" id="Q96NL6">
    <property type="glycosylation" value="1 site, 1 O-linked glycan (1 site)"/>
</dbReference>
<dbReference type="iPTMnet" id="Q96NL6"/>
<dbReference type="PhosphoSitePlus" id="Q96NL6"/>
<dbReference type="BioMuta" id="SCLT1"/>
<dbReference type="DMDM" id="300669665"/>
<dbReference type="jPOST" id="Q96NL6"/>
<dbReference type="MassIVE" id="Q96NL6"/>
<dbReference type="PaxDb" id="9606-ENSP00000281142"/>
<dbReference type="PeptideAtlas" id="Q96NL6"/>
<dbReference type="ProteomicsDB" id="77532">
    <molecule id="Q96NL6-1"/>
</dbReference>
<dbReference type="ProteomicsDB" id="77533">
    <molecule id="Q96NL6-2"/>
</dbReference>
<dbReference type="ProteomicsDB" id="77534">
    <molecule id="Q96NL6-3"/>
</dbReference>
<dbReference type="ProteomicsDB" id="77535">
    <molecule id="Q96NL6-4"/>
</dbReference>
<dbReference type="Pumba" id="Q96NL6"/>
<dbReference type="Antibodypedia" id="45370">
    <property type="antibodies" value="127 antibodies from 21 providers"/>
</dbReference>
<dbReference type="DNASU" id="132320"/>
<dbReference type="Ensembl" id="ENST00000281142.10">
    <molecule id="Q96NL6-1"/>
    <property type="protein sequence ID" value="ENSP00000281142.5"/>
    <property type="gene ID" value="ENSG00000151466.12"/>
</dbReference>
<dbReference type="Ensembl" id="ENST00000439369.6">
    <molecule id="Q96NL6-3"/>
    <property type="protein sequence ID" value="ENSP00000395292.2"/>
    <property type="gene ID" value="ENSG00000151466.12"/>
</dbReference>
<dbReference type="Ensembl" id="ENST00000511426.5">
    <molecule id="Q96NL6-4"/>
    <property type="protein sequence ID" value="ENSP00000420861.1"/>
    <property type="gene ID" value="ENSG00000151466.12"/>
</dbReference>
<dbReference type="GeneID" id="132320"/>
<dbReference type="KEGG" id="hsa:132320"/>
<dbReference type="MANE-Select" id="ENST00000281142.10">
    <property type="protein sequence ID" value="ENSP00000281142.5"/>
    <property type="RefSeq nucleotide sequence ID" value="NM_144643.4"/>
    <property type="RefSeq protein sequence ID" value="NP_653244.2"/>
</dbReference>
<dbReference type="UCSC" id="uc003igp.3">
    <molecule id="Q96NL6-1"/>
    <property type="organism name" value="human"/>
</dbReference>
<dbReference type="AGR" id="HGNC:26406"/>
<dbReference type="CTD" id="132320"/>
<dbReference type="DisGeNET" id="132320"/>
<dbReference type="GeneCards" id="SCLT1"/>
<dbReference type="HGNC" id="HGNC:26406">
    <property type="gene designation" value="SCLT1"/>
</dbReference>
<dbReference type="HPA" id="ENSG00000151466">
    <property type="expression patterns" value="Low tissue specificity"/>
</dbReference>
<dbReference type="MalaCards" id="SCLT1"/>
<dbReference type="MIM" id="611399">
    <property type="type" value="gene"/>
</dbReference>
<dbReference type="neXtProt" id="NX_Q96NL6"/>
<dbReference type="OpenTargets" id="ENSG00000151466"/>
<dbReference type="Orphanet" id="110">
    <property type="disease" value="Bardet-Biedl syndrome"/>
</dbReference>
<dbReference type="PharmGKB" id="PA147357369"/>
<dbReference type="VEuPathDB" id="HostDB:ENSG00000151466"/>
<dbReference type="eggNOG" id="ENOG502QS6B">
    <property type="taxonomic scope" value="Eukaryota"/>
</dbReference>
<dbReference type="GeneTree" id="ENSGT00730000111168"/>
<dbReference type="HOGENOM" id="CLU_025503_0_0_1"/>
<dbReference type="InParanoid" id="Q96NL6"/>
<dbReference type="OMA" id="RIHLEEC"/>
<dbReference type="OrthoDB" id="551053at2759"/>
<dbReference type="PAN-GO" id="Q96NL6">
    <property type="GO annotations" value="2 GO annotations based on evolutionary models"/>
</dbReference>
<dbReference type="PhylomeDB" id="Q96NL6"/>
<dbReference type="TreeFam" id="TF331372"/>
<dbReference type="PathwayCommons" id="Q96NL6"/>
<dbReference type="Reactome" id="R-HSA-5620912">
    <property type="pathway name" value="Anchoring of the basal body to the plasma membrane"/>
</dbReference>
<dbReference type="SignaLink" id="Q96NL6"/>
<dbReference type="BioGRID-ORCS" id="132320">
    <property type="hits" value="12 hits in 1143 CRISPR screens"/>
</dbReference>
<dbReference type="ChiTaRS" id="SCLT1">
    <property type="organism name" value="human"/>
</dbReference>
<dbReference type="GenomeRNAi" id="132320"/>
<dbReference type="Pharos" id="Q96NL6">
    <property type="development level" value="Tbio"/>
</dbReference>
<dbReference type="PRO" id="PR:Q96NL6"/>
<dbReference type="Proteomes" id="UP000005640">
    <property type="component" value="Chromosome 4"/>
</dbReference>
<dbReference type="RNAct" id="Q96NL6">
    <property type="molecule type" value="protein"/>
</dbReference>
<dbReference type="Bgee" id="ENSG00000151466">
    <property type="expression patterns" value="Expressed in buccal mucosa cell and 142 other cell types or tissues"/>
</dbReference>
<dbReference type="ExpressionAtlas" id="Q96NL6">
    <property type="expression patterns" value="baseline and differential"/>
</dbReference>
<dbReference type="GO" id="GO:0005814">
    <property type="term" value="C:centriole"/>
    <property type="evidence" value="ECO:0000314"/>
    <property type="project" value="UniProtKB"/>
</dbReference>
<dbReference type="GO" id="GO:0005813">
    <property type="term" value="C:centrosome"/>
    <property type="evidence" value="ECO:0000314"/>
    <property type="project" value="UniProtKB"/>
</dbReference>
<dbReference type="GO" id="GO:0036064">
    <property type="term" value="C:ciliary basal body"/>
    <property type="evidence" value="ECO:0000314"/>
    <property type="project" value="HPA"/>
</dbReference>
<dbReference type="GO" id="GO:0097539">
    <property type="term" value="C:ciliary transition fiber"/>
    <property type="evidence" value="ECO:0000314"/>
    <property type="project" value="MGI"/>
</dbReference>
<dbReference type="GO" id="GO:0071439">
    <property type="term" value="C:clathrin complex"/>
    <property type="evidence" value="ECO:0007669"/>
    <property type="project" value="Ensembl"/>
</dbReference>
<dbReference type="GO" id="GO:0005829">
    <property type="term" value="C:cytosol"/>
    <property type="evidence" value="ECO:0000314"/>
    <property type="project" value="HPA"/>
</dbReference>
<dbReference type="GO" id="GO:0015630">
    <property type="term" value="C:microtubule cytoskeleton"/>
    <property type="evidence" value="ECO:0000314"/>
    <property type="project" value="HPA"/>
</dbReference>
<dbReference type="GO" id="GO:0030276">
    <property type="term" value="F:clathrin binding"/>
    <property type="evidence" value="ECO:0007669"/>
    <property type="project" value="Ensembl"/>
</dbReference>
<dbReference type="GO" id="GO:0017080">
    <property type="term" value="F:sodium channel regulator activity"/>
    <property type="evidence" value="ECO:0007669"/>
    <property type="project" value="Ensembl"/>
</dbReference>
<dbReference type="GO" id="GO:0060271">
    <property type="term" value="P:cilium assembly"/>
    <property type="evidence" value="ECO:0000315"/>
    <property type="project" value="UniProtKB"/>
</dbReference>
<dbReference type="GO" id="GO:0045162">
    <property type="term" value="P:clustering of voltage-gated sodium channels"/>
    <property type="evidence" value="ECO:0007669"/>
    <property type="project" value="Ensembl"/>
</dbReference>
<dbReference type="InterPro" id="IPR038911">
    <property type="entry name" value="SCLT1"/>
</dbReference>
<dbReference type="PANTHER" id="PTHR35970">
    <property type="entry name" value="SODIUM CHANNEL AND CLATHRIN LINKER 1"/>
    <property type="match status" value="1"/>
</dbReference>
<dbReference type="PANTHER" id="PTHR35970:SF1">
    <property type="entry name" value="SODIUM CHANNEL AND CLATHRIN LINKER 1"/>
    <property type="match status" value="1"/>
</dbReference>